<evidence type="ECO:0000255" key="1">
    <source>
        <dbReference type="HAMAP-Rule" id="MF_01018"/>
    </source>
</evidence>
<reference key="1">
    <citation type="journal article" date="2003" name="Nat. Genet.">
        <title>Comparative analysis of the genome sequences of Bordetella pertussis, Bordetella parapertussis and Bordetella bronchiseptica.</title>
        <authorList>
            <person name="Parkhill J."/>
            <person name="Sebaihia M."/>
            <person name="Preston A."/>
            <person name="Murphy L.D."/>
            <person name="Thomson N.R."/>
            <person name="Harris D.E."/>
            <person name="Holden M.T.G."/>
            <person name="Churcher C.M."/>
            <person name="Bentley S.D."/>
            <person name="Mungall K.L."/>
            <person name="Cerdeno-Tarraga A.-M."/>
            <person name="Temple L."/>
            <person name="James K.D."/>
            <person name="Harris B."/>
            <person name="Quail M.A."/>
            <person name="Achtman M."/>
            <person name="Atkin R."/>
            <person name="Baker S."/>
            <person name="Basham D."/>
            <person name="Bason N."/>
            <person name="Cherevach I."/>
            <person name="Chillingworth T."/>
            <person name="Collins M."/>
            <person name="Cronin A."/>
            <person name="Davis P."/>
            <person name="Doggett J."/>
            <person name="Feltwell T."/>
            <person name="Goble A."/>
            <person name="Hamlin N."/>
            <person name="Hauser H."/>
            <person name="Holroyd S."/>
            <person name="Jagels K."/>
            <person name="Leather S."/>
            <person name="Moule S."/>
            <person name="Norberczak H."/>
            <person name="O'Neil S."/>
            <person name="Ormond D."/>
            <person name="Price C."/>
            <person name="Rabbinowitsch E."/>
            <person name="Rutter S."/>
            <person name="Sanders M."/>
            <person name="Saunders D."/>
            <person name="Seeger K."/>
            <person name="Sharp S."/>
            <person name="Simmonds M."/>
            <person name="Skelton J."/>
            <person name="Squares R."/>
            <person name="Squares S."/>
            <person name="Stevens K."/>
            <person name="Unwin L."/>
            <person name="Whitehead S."/>
            <person name="Barrell B.G."/>
            <person name="Maskell D.J."/>
        </authorList>
    </citation>
    <scope>NUCLEOTIDE SEQUENCE [LARGE SCALE GENOMIC DNA]</scope>
    <source>
        <strain>ATCC BAA-588 / NCTC 13252 / RB50</strain>
    </source>
</reference>
<name>HIS1_BORBR</name>
<organism>
    <name type="scientific">Bordetella bronchiseptica (strain ATCC BAA-588 / NCTC 13252 / RB50)</name>
    <name type="common">Alcaligenes bronchisepticus</name>
    <dbReference type="NCBI Taxonomy" id="257310"/>
    <lineage>
        <taxon>Bacteria</taxon>
        <taxon>Pseudomonadati</taxon>
        <taxon>Pseudomonadota</taxon>
        <taxon>Betaproteobacteria</taxon>
        <taxon>Burkholderiales</taxon>
        <taxon>Alcaligenaceae</taxon>
        <taxon>Bordetella</taxon>
    </lineage>
</organism>
<dbReference type="EC" id="2.4.2.17" evidence="1"/>
<dbReference type="EMBL" id="BX640451">
    <property type="protein sequence ID" value="CAE35216.1"/>
    <property type="molecule type" value="Genomic_DNA"/>
</dbReference>
<dbReference type="RefSeq" id="WP_003815789.1">
    <property type="nucleotide sequence ID" value="NC_002927.3"/>
</dbReference>
<dbReference type="SMR" id="Q7WDY5"/>
<dbReference type="GeneID" id="93206063"/>
<dbReference type="KEGG" id="bbr:BB4853"/>
<dbReference type="eggNOG" id="COG0040">
    <property type="taxonomic scope" value="Bacteria"/>
</dbReference>
<dbReference type="HOGENOM" id="CLU_038115_2_0_4"/>
<dbReference type="UniPathway" id="UPA00031">
    <property type="reaction ID" value="UER00006"/>
</dbReference>
<dbReference type="Proteomes" id="UP000001027">
    <property type="component" value="Chromosome"/>
</dbReference>
<dbReference type="GO" id="GO:0005737">
    <property type="term" value="C:cytoplasm"/>
    <property type="evidence" value="ECO:0007669"/>
    <property type="project" value="UniProtKB-SubCell"/>
</dbReference>
<dbReference type="GO" id="GO:0005524">
    <property type="term" value="F:ATP binding"/>
    <property type="evidence" value="ECO:0007669"/>
    <property type="project" value="UniProtKB-KW"/>
</dbReference>
<dbReference type="GO" id="GO:0003879">
    <property type="term" value="F:ATP phosphoribosyltransferase activity"/>
    <property type="evidence" value="ECO:0007669"/>
    <property type="project" value="UniProtKB-UniRule"/>
</dbReference>
<dbReference type="GO" id="GO:0000105">
    <property type="term" value="P:L-histidine biosynthetic process"/>
    <property type="evidence" value="ECO:0007669"/>
    <property type="project" value="UniProtKB-UniRule"/>
</dbReference>
<dbReference type="CDD" id="cd13595">
    <property type="entry name" value="PBP2_HisGs"/>
    <property type="match status" value="1"/>
</dbReference>
<dbReference type="FunFam" id="3.40.190.10:FF:000011">
    <property type="entry name" value="ATP phosphoribosyltransferase"/>
    <property type="match status" value="1"/>
</dbReference>
<dbReference type="Gene3D" id="3.40.190.10">
    <property type="entry name" value="Periplasmic binding protein-like II"/>
    <property type="match status" value="2"/>
</dbReference>
<dbReference type="HAMAP" id="MF_01018">
    <property type="entry name" value="HisG_Short"/>
    <property type="match status" value="1"/>
</dbReference>
<dbReference type="InterPro" id="IPR013820">
    <property type="entry name" value="ATP_PRibTrfase_cat"/>
</dbReference>
<dbReference type="InterPro" id="IPR018198">
    <property type="entry name" value="ATP_PRibTrfase_CS"/>
</dbReference>
<dbReference type="InterPro" id="IPR001348">
    <property type="entry name" value="ATP_PRibTrfase_HisG"/>
</dbReference>
<dbReference type="InterPro" id="IPR024893">
    <property type="entry name" value="ATP_PRibTrfase_HisG_short"/>
</dbReference>
<dbReference type="NCBIfam" id="TIGR00070">
    <property type="entry name" value="hisG"/>
    <property type="match status" value="1"/>
</dbReference>
<dbReference type="PANTHER" id="PTHR21403:SF8">
    <property type="entry name" value="ATP PHOSPHORIBOSYLTRANSFERASE"/>
    <property type="match status" value="1"/>
</dbReference>
<dbReference type="PANTHER" id="PTHR21403">
    <property type="entry name" value="ATP PHOSPHORIBOSYLTRANSFERASE ATP-PRTASE"/>
    <property type="match status" value="1"/>
</dbReference>
<dbReference type="Pfam" id="PF01634">
    <property type="entry name" value="HisG"/>
    <property type="match status" value="1"/>
</dbReference>
<dbReference type="SUPFAM" id="SSF53850">
    <property type="entry name" value="Periplasmic binding protein-like II"/>
    <property type="match status" value="1"/>
</dbReference>
<dbReference type="PROSITE" id="PS01316">
    <property type="entry name" value="ATP_P_PHORIBOSYLTR"/>
    <property type="match status" value="1"/>
</dbReference>
<protein>
    <recommendedName>
        <fullName evidence="1">ATP phosphoribosyltransferase</fullName>
        <shortName evidence="1">ATP-PRT</shortName>
        <shortName evidence="1">ATP-PRTase</shortName>
        <ecNumber evidence="1">2.4.2.17</ecNumber>
    </recommendedName>
</protein>
<comment type="function">
    <text evidence="1">Catalyzes the condensation of ATP and 5-phosphoribose 1-diphosphate to form N'-(5'-phosphoribosyl)-ATP (PR-ATP). Has a crucial role in the pathway because the rate of histidine biosynthesis seems to be controlled primarily by regulation of HisG enzymatic activity.</text>
</comment>
<comment type="catalytic activity">
    <reaction evidence="1">
        <text>1-(5-phospho-beta-D-ribosyl)-ATP + diphosphate = 5-phospho-alpha-D-ribose 1-diphosphate + ATP</text>
        <dbReference type="Rhea" id="RHEA:18473"/>
        <dbReference type="ChEBI" id="CHEBI:30616"/>
        <dbReference type="ChEBI" id="CHEBI:33019"/>
        <dbReference type="ChEBI" id="CHEBI:58017"/>
        <dbReference type="ChEBI" id="CHEBI:73183"/>
        <dbReference type="EC" id="2.4.2.17"/>
    </reaction>
</comment>
<comment type="pathway">
    <text evidence="1">Amino-acid biosynthesis; L-histidine biosynthesis; L-histidine from 5-phospho-alpha-D-ribose 1-diphosphate: step 1/9.</text>
</comment>
<comment type="subunit">
    <text evidence="1">Heteromultimer composed of HisG and HisZ subunits.</text>
</comment>
<comment type="subcellular location">
    <subcellularLocation>
        <location evidence="1">Cytoplasm</location>
    </subcellularLocation>
</comment>
<comment type="domain">
    <text>Lacks the C-terminal regulatory region which is replaced by HisZ.</text>
</comment>
<comment type="similarity">
    <text evidence="1">Belongs to the ATP phosphoribosyltransferase family. Short subfamily.</text>
</comment>
<keyword id="KW-0028">Amino-acid biosynthesis</keyword>
<keyword id="KW-0067">ATP-binding</keyword>
<keyword id="KW-0963">Cytoplasm</keyword>
<keyword id="KW-0328">Glycosyltransferase</keyword>
<keyword id="KW-0368">Histidine biosynthesis</keyword>
<keyword id="KW-0547">Nucleotide-binding</keyword>
<keyword id="KW-0808">Transferase</keyword>
<feature type="chain" id="PRO_0000151899" description="ATP phosphoribosyltransferase">
    <location>
        <begin position="1"/>
        <end position="223"/>
    </location>
</feature>
<accession>Q7WDY5</accession>
<sequence>MSPAAAPLTLALSKGRIFEETMPLLAEAGIEVPENPESSRKLILPTSDPGLRLIIVRASDVPTYVQYGAADLGIAGKDVLIEHAAQQSGRLYQPIDLNIAKCRLCVAVRQDFDYQAAVHQGARLRVATKYVQSAREHFAAKGVHVDIIKLYGSMELAPLVGLADAIVDLVSTGGTLRANGLAAVEDVMPISSRLIVNQAALKTRGARLQPLIDAFRRASERIA</sequence>
<gene>
    <name evidence="1" type="primary">hisG</name>
    <name type="ordered locus">BB4853</name>
</gene>
<proteinExistence type="inferred from homology"/>